<evidence type="ECO:0000255" key="1">
    <source>
        <dbReference type="HAMAP-Rule" id="MF_01588"/>
    </source>
</evidence>
<feature type="chain" id="PRO_0000313409" description="DNA ligase">
    <location>
        <begin position="1"/>
        <end position="689"/>
    </location>
</feature>
<feature type="domain" description="BRCT" evidence="1">
    <location>
        <begin position="610"/>
        <end position="689"/>
    </location>
</feature>
<feature type="active site" description="N6-AMP-lysine intermediate" evidence="1">
    <location>
        <position position="123"/>
    </location>
</feature>
<feature type="binding site" evidence="1">
    <location>
        <begin position="40"/>
        <end position="44"/>
    </location>
    <ligand>
        <name>NAD(+)</name>
        <dbReference type="ChEBI" id="CHEBI:57540"/>
    </ligand>
</feature>
<feature type="binding site" evidence="1">
    <location>
        <begin position="89"/>
        <end position="90"/>
    </location>
    <ligand>
        <name>NAD(+)</name>
        <dbReference type="ChEBI" id="CHEBI:57540"/>
    </ligand>
</feature>
<feature type="binding site" evidence="1">
    <location>
        <position position="121"/>
    </location>
    <ligand>
        <name>NAD(+)</name>
        <dbReference type="ChEBI" id="CHEBI:57540"/>
    </ligand>
</feature>
<feature type="binding site" evidence="1">
    <location>
        <position position="144"/>
    </location>
    <ligand>
        <name>NAD(+)</name>
        <dbReference type="ChEBI" id="CHEBI:57540"/>
    </ligand>
</feature>
<feature type="binding site" evidence="1">
    <location>
        <position position="179"/>
    </location>
    <ligand>
        <name>NAD(+)</name>
        <dbReference type="ChEBI" id="CHEBI:57540"/>
    </ligand>
</feature>
<feature type="binding site" evidence="1">
    <location>
        <position position="295"/>
    </location>
    <ligand>
        <name>NAD(+)</name>
        <dbReference type="ChEBI" id="CHEBI:57540"/>
    </ligand>
</feature>
<feature type="binding site" evidence="1">
    <location>
        <position position="319"/>
    </location>
    <ligand>
        <name>NAD(+)</name>
        <dbReference type="ChEBI" id="CHEBI:57540"/>
    </ligand>
</feature>
<feature type="binding site" evidence="1">
    <location>
        <position position="413"/>
    </location>
    <ligand>
        <name>Zn(2+)</name>
        <dbReference type="ChEBI" id="CHEBI:29105"/>
    </ligand>
</feature>
<feature type="binding site" evidence="1">
    <location>
        <position position="416"/>
    </location>
    <ligand>
        <name>Zn(2+)</name>
        <dbReference type="ChEBI" id="CHEBI:29105"/>
    </ligand>
</feature>
<feature type="binding site" evidence="1">
    <location>
        <position position="431"/>
    </location>
    <ligand>
        <name>Zn(2+)</name>
        <dbReference type="ChEBI" id="CHEBI:29105"/>
    </ligand>
</feature>
<feature type="binding site" evidence="1">
    <location>
        <position position="437"/>
    </location>
    <ligand>
        <name>Zn(2+)</name>
        <dbReference type="ChEBI" id="CHEBI:29105"/>
    </ligand>
</feature>
<reference key="1">
    <citation type="journal article" date="2007" name="Genome Res.">
        <title>Lateral gene transfer between obligate intracellular bacteria: evidence from the Rickettsia massiliae genome.</title>
        <authorList>
            <person name="Blanc G."/>
            <person name="Ogata H."/>
            <person name="Robert C."/>
            <person name="Audic S."/>
            <person name="Claverie J.-M."/>
            <person name="Raoult D."/>
        </authorList>
    </citation>
    <scope>NUCLEOTIDE SEQUENCE [LARGE SCALE GENOMIC DNA]</scope>
    <source>
        <strain>Mtu5</strain>
    </source>
</reference>
<keyword id="KW-0227">DNA damage</keyword>
<keyword id="KW-0234">DNA repair</keyword>
<keyword id="KW-0235">DNA replication</keyword>
<keyword id="KW-0436">Ligase</keyword>
<keyword id="KW-0460">Magnesium</keyword>
<keyword id="KW-0464">Manganese</keyword>
<keyword id="KW-0479">Metal-binding</keyword>
<keyword id="KW-0520">NAD</keyword>
<keyword id="KW-0862">Zinc</keyword>
<comment type="function">
    <text evidence="1">DNA ligase that catalyzes the formation of phosphodiester linkages between 5'-phosphoryl and 3'-hydroxyl groups in double-stranded DNA using NAD as a coenzyme and as the energy source for the reaction. It is essential for DNA replication and repair of damaged DNA.</text>
</comment>
<comment type="catalytic activity">
    <reaction evidence="1">
        <text>NAD(+) + (deoxyribonucleotide)n-3'-hydroxyl + 5'-phospho-(deoxyribonucleotide)m = (deoxyribonucleotide)n+m + AMP + beta-nicotinamide D-nucleotide.</text>
        <dbReference type="EC" id="6.5.1.2"/>
    </reaction>
</comment>
<comment type="cofactor">
    <cofactor evidence="1">
        <name>Mg(2+)</name>
        <dbReference type="ChEBI" id="CHEBI:18420"/>
    </cofactor>
    <cofactor evidence="1">
        <name>Mn(2+)</name>
        <dbReference type="ChEBI" id="CHEBI:29035"/>
    </cofactor>
</comment>
<comment type="similarity">
    <text evidence="1">Belongs to the NAD-dependent DNA ligase family. LigA subfamily.</text>
</comment>
<accession>A8F2K5</accession>
<sequence length="689" mass="77712">MQNIDLISEKEAQKLLEELADKIAAYNHAYYIEDNPLVSDSEYDQLFNTNLKLEQKFPHLILENSPSKKVGAKIANKFAKVTHQVPMLSLSNAFDEQDVRDFVDRIKNFLRLNEFAPIFCEPKIDGLSFSAVYKNGVLTTGATRGDGYVGEDITANIKTIKNFPHKIDNVPEFLEVRGEIYIEKQDFLNLNKEQEEQGKDKFANPRNAAAGSLRQLDASITAKRPLKYFVYSGGVTEQNLASSQDQLLTKLKECGFNINEISKLASSEEEIFAFYEYLKTNREDLPYEIDGVVYKLNDFALQNRMGFIARSPRFATAHKFPAIIGQTQLLSITVQVGRTGTLTPVAELEPIEIGGVTVSRATLHNFQEIARKDVRIKDYVFLQRAGDVIPKIMGVDFDKRPNDTATFDTPLFCLSCNSKLHYMPEDIIIRCDNGLNCPAQNYERIRHFVSKNAMDIEGLGRKQVEFLIDKGLISNPLDIFFLKEKNDSSLAKLENMDGWGKKSVENLFKNIEKSKNVSLPRFIYALGIRHIGEQNAKLLAREVGSYNNFIAQMELLRTNEPDIYQKLNNLEGIGDKILVDIIDFFDVKENIELIKKLGEILNIEDYKETREQSSLTDKIVVFTGSLPTISRAEAKATAEKLGAKVTAGVSSNTDLVVAGVDAGSKLKKAKELNIKIIDEEEWLTLIKNV</sequence>
<name>DNLJ_RICM5</name>
<proteinExistence type="inferred from homology"/>
<protein>
    <recommendedName>
        <fullName evidence="1">DNA ligase</fullName>
        <ecNumber evidence="1">6.5.1.2</ecNumber>
    </recommendedName>
    <alternativeName>
        <fullName evidence="1">Polydeoxyribonucleotide synthase [NAD(+)]</fullName>
    </alternativeName>
</protein>
<gene>
    <name evidence="1" type="primary">ligA</name>
    <name type="ordered locus">RMA_1131</name>
</gene>
<dbReference type="EC" id="6.5.1.2" evidence="1"/>
<dbReference type="EMBL" id="CP000683">
    <property type="protein sequence ID" value="ABV85141.1"/>
    <property type="molecule type" value="Genomic_DNA"/>
</dbReference>
<dbReference type="RefSeq" id="WP_012153105.1">
    <property type="nucleotide sequence ID" value="NC_009900.1"/>
</dbReference>
<dbReference type="SMR" id="A8F2K5"/>
<dbReference type="KEGG" id="rms:RMA_1131"/>
<dbReference type="HOGENOM" id="CLU_007764_2_1_5"/>
<dbReference type="Proteomes" id="UP000001311">
    <property type="component" value="Chromosome"/>
</dbReference>
<dbReference type="GO" id="GO:0005829">
    <property type="term" value="C:cytosol"/>
    <property type="evidence" value="ECO:0007669"/>
    <property type="project" value="TreeGrafter"/>
</dbReference>
<dbReference type="GO" id="GO:0003911">
    <property type="term" value="F:DNA ligase (NAD+) activity"/>
    <property type="evidence" value="ECO:0007669"/>
    <property type="project" value="UniProtKB-UniRule"/>
</dbReference>
<dbReference type="GO" id="GO:0046872">
    <property type="term" value="F:metal ion binding"/>
    <property type="evidence" value="ECO:0007669"/>
    <property type="project" value="UniProtKB-KW"/>
</dbReference>
<dbReference type="GO" id="GO:0006281">
    <property type="term" value="P:DNA repair"/>
    <property type="evidence" value="ECO:0007669"/>
    <property type="project" value="UniProtKB-KW"/>
</dbReference>
<dbReference type="GO" id="GO:0006260">
    <property type="term" value="P:DNA replication"/>
    <property type="evidence" value="ECO:0007669"/>
    <property type="project" value="UniProtKB-KW"/>
</dbReference>
<dbReference type="CDD" id="cd17748">
    <property type="entry name" value="BRCT_DNA_ligase_like"/>
    <property type="match status" value="1"/>
</dbReference>
<dbReference type="CDD" id="cd00114">
    <property type="entry name" value="LIGANc"/>
    <property type="match status" value="1"/>
</dbReference>
<dbReference type="FunFam" id="1.10.150.20:FF:000007">
    <property type="entry name" value="DNA ligase"/>
    <property type="match status" value="1"/>
</dbReference>
<dbReference type="FunFam" id="2.40.50.140:FF:000012">
    <property type="entry name" value="DNA ligase"/>
    <property type="match status" value="1"/>
</dbReference>
<dbReference type="FunFam" id="3.30.470.30:FF:000001">
    <property type="entry name" value="DNA ligase"/>
    <property type="match status" value="1"/>
</dbReference>
<dbReference type="Gene3D" id="1.10.150.20">
    <property type="entry name" value="5' to 3' exonuclease, C-terminal subdomain"/>
    <property type="match status" value="2"/>
</dbReference>
<dbReference type="Gene3D" id="3.40.50.10190">
    <property type="entry name" value="BRCT domain"/>
    <property type="match status" value="1"/>
</dbReference>
<dbReference type="Gene3D" id="3.30.470.30">
    <property type="entry name" value="DNA ligase/mRNA capping enzyme"/>
    <property type="match status" value="1"/>
</dbReference>
<dbReference type="Gene3D" id="1.10.287.610">
    <property type="entry name" value="Helix hairpin bin"/>
    <property type="match status" value="1"/>
</dbReference>
<dbReference type="Gene3D" id="2.40.50.140">
    <property type="entry name" value="Nucleic acid-binding proteins"/>
    <property type="match status" value="1"/>
</dbReference>
<dbReference type="HAMAP" id="MF_01588">
    <property type="entry name" value="DNA_ligase_A"/>
    <property type="match status" value="1"/>
</dbReference>
<dbReference type="InterPro" id="IPR001357">
    <property type="entry name" value="BRCT_dom"/>
</dbReference>
<dbReference type="InterPro" id="IPR036420">
    <property type="entry name" value="BRCT_dom_sf"/>
</dbReference>
<dbReference type="InterPro" id="IPR041663">
    <property type="entry name" value="DisA/LigA_HHH"/>
</dbReference>
<dbReference type="InterPro" id="IPR001679">
    <property type="entry name" value="DNA_ligase"/>
</dbReference>
<dbReference type="InterPro" id="IPR018239">
    <property type="entry name" value="DNA_ligase_AS"/>
</dbReference>
<dbReference type="InterPro" id="IPR033136">
    <property type="entry name" value="DNA_ligase_CS"/>
</dbReference>
<dbReference type="InterPro" id="IPR013839">
    <property type="entry name" value="DNAligase_adenylation"/>
</dbReference>
<dbReference type="InterPro" id="IPR013840">
    <property type="entry name" value="DNAligase_N"/>
</dbReference>
<dbReference type="InterPro" id="IPR012340">
    <property type="entry name" value="NA-bd_OB-fold"/>
</dbReference>
<dbReference type="InterPro" id="IPR004150">
    <property type="entry name" value="NAD_DNA_ligase_OB"/>
</dbReference>
<dbReference type="InterPro" id="IPR010994">
    <property type="entry name" value="RuvA_2-like"/>
</dbReference>
<dbReference type="NCBIfam" id="TIGR00575">
    <property type="entry name" value="dnlj"/>
    <property type="match status" value="1"/>
</dbReference>
<dbReference type="NCBIfam" id="NF005932">
    <property type="entry name" value="PRK07956.1"/>
    <property type="match status" value="1"/>
</dbReference>
<dbReference type="PANTHER" id="PTHR23389">
    <property type="entry name" value="CHROMOSOME TRANSMISSION FIDELITY FACTOR 18"/>
    <property type="match status" value="1"/>
</dbReference>
<dbReference type="PANTHER" id="PTHR23389:SF9">
    <property type="entry name" value="DNA LIGASE"/>
    <property type="match status" value="1"/>
</dbReference>
<dbReference type="Pfam" id="PF00533">
    <property type="entry name" value="BRCT"/>
    <property type="match status" value="1"/>
</dbReference>
<dbReference type="Pfam" id="PF01653">
    <property type="entry name" value="DNA_ligase_aden"/>
    <property type="match status" value="1"/>
</dbReference>
<dbReference type="Pfam" id="PF03120">
    <property type="entry name" value="DNA_ligase_OB"/>
    <property type="match status" value="1"/>
</dbReference>
<dbReference type="Pfam" id="PF12826">
    <property type="entry name" value="HHH_2"/>
    <property type="match status" value="1"/>
</dbReference>
<dbReference type="PIRSF" id="PIRSF001604">
    <property type="entry name" value="LigA"/>
    <property type="match status" value="1"/>
</dbReference>
<dbReference type="SMART" id="SM00292">
    <property type="entry name" value="BRCT"/>
    <property type="match status" value="1"/>
</dbReference>
<dbReference type="SMART" id="SM00532">
    <property type="entry name" value="LIGANc"/>
    <property type="match status" value="1"/>
</dbReference>
<dbReference type="SUPFAM" id="SSF52113">
    <property type="entry name" value="BRCT domain"/>
    <property type="match status" value="1"/>
</dbReference>
<dbReference type="SUPFAM" id="SSF56091">
    <property type="entry name" value="DNA ligase/mRNA capping enzyme, catalytic domain"/>
    <property type="match status" value="1"/>
</dbReference>
<dbReference type="SUPFAM" id="SSF50249">
    <property type="entry name" value="Nucleic acid-binding proteins"/>
    <property type="match status" value="1"/>
</dbReference>
<dbReference type="SUPFAM" id="SSF47781">
    <property type="entry name" value="RuvA domain 2-like"/>
    <property type="match status" value="1"/>
</dbReference>
<dbReference type="PROSITE" id="PS50172">
    <property type="entry name" value="BRCT"/>
    <property type="match status" value="1"/>
</dbReference>
<dbReference type="PROSITE" id="PS01055">
    <property type="entry name" value="DNA_LIGASE_N1"/>
    <property type="match status" value="1"/>
</dbReference>
<dbReference type="PROSITE" id="PS01056">
    <property type="entry name" value="DNA_LIGASE_N2"/>
    <property type="match status" value="1"/>
</dbReference>
<organism>
    <name type="scientific">Rickettsia massiliae (strain Mtu5)</name>
    <dbReference type="NCBI Taxonomy" id="416276"/>
    <lineage>
        <taxon>Bacteria</taxon>
        <taxon>Pseudomonadati</taxon>
        <taxon>Pseudomonadota</taxon>
        <taxon>Alphaproteobacteria</taxon>
        <taxon>Rickettsiales</taxon>
        <taxon>Rickettsiaceae</taxon>
        <taxon>Rickettsieae</taxon>
        <taxon>Rickettsia</taxon>
        <taxon>spotted fever group</taxon>
    </lineage>
</organism>